<sequence>MECATTATTPWERVRQRLREEIGEEKFTSWFARMDLDKLTADAVQLSVPTRFLKSWIQENYLPRIADIWAEESGAKRRVDLAVRNAFARPVALKANTVREVVTERTDMHSGDTRQQSARISDGRSTDARGADGRGSDARAVEPRAAAAALSDAVAGDVASGSPLDARLTFETFVVGKSNSLAFAAAKQVAESAPGSAPVFNPLYLHAAVGLGKTHLLQAIARAGAVGGRRTTYLTAERFMYGFVAALKTHSAIAFKDALRTIDTLVIDDLQFLKGNNLQQEFCHTLNALLDGGRQVVVAADCLPGELEHLDERVRSRLAGGLVVELAALEEDLRLEILKARYQTLTEQHPGFAVPAPVLEFLARSVGQSGRDLDGALNKLLAFNQLTGEPVTLEMAENAVKDLIRPTDPKRVRVDDILRVVAKHYNVSRADLLSQRRTATVVKPRQIAMYLAKTLTLRSLPEIGRRFGGRDHTTVLHAVRKIDGLVNADRALAEEIEVLKRLALEA</sequence>
<feature type="chain" id="PRO_1000122035" description="Chromosomal replication initiator protein DnaA">
    <location>
        <begin position="1"/>
        <end position="506"/>
    </location>
</feature>
<feature type="region of interest" description="Domain I, interacts with DnaA modulators" evidence="1">
    <location>
        <begin position="1"/>
        <end position="77"/>
    </location>
</feature>
<feature type="region of interest" description="Domain II" evidence="1">
    <location>
        <begin position="77"/>
        <end position="162"/>
    </location>
</feature>
<feature type="region of interest" description="Disordered" evidence="2">
    <location>
        <begin position="103"/>
        <end position="142"/>
    </location>
</feature>
<feature type="region of interest" description="Domain III, AAA+ region" evidence="1">
    <location>
        <begin position="163"/>
        <end position="384"/>
    </location>
</feature>
<feature type="region of interest" description="Domain IV, binds dsDNA" evidence="1">
    <location>
        <begin position="385"/>
        <end position="506"/>
    </location>
</feature>
<feature type="compositionally biased region" description="Basic and acidic residues" evidence="2">
    <location>
        <begin position="103"/>
        <end position="112"/>
    </location>
</feature>
<feature type="compositionally biased region" description="Basic and acidic residues" evidence="2">
    <location>
        <begin position="121"/>
        <end position="142"/>
    </location>
</feature>
<feature type="binding site" evidence="1">
    <location>
        <position position="210"/>
    </location>
    <ligand>
        <name>ATP</name>
        <dbReference type="ChEBI" id="CHEBI:30616"/>
    </ligand>
</feature>
<feature type="binding site" evidence="1">
    <location>
        <position position="212"/>
    </location>
    <ligand>
        <name>ATP</name>
        <dbReference type="ChEBI" id="CHEBI:30616"/>
    </ligand>
</feature>
<feature type="binding site" evidence="1">
    <location>
        <position position="213"/>
    </location>
    <ligand>
        <name>ATP</name>
        <dbReference type="ChEBI" id="CHEBI:30616"/>
    </ligand>
</feature>
<feature type="binding site" evidence="1">
    <location>
        <position position="214"/>
    </location>
    <ligand>
        <name>ATP</name>
        <dbReference type="ChEBI" id="CHEBI:30616"/>
    </ligand>
</feature>
<evidence type="ECO:0000255" key="1">
    <source>
        <dbReference type="HAMAP-Rule" id="MF_00377"/>
    </source>
</evidence>
<evidence type="ECO:0000256" key="2">
    <source>
        <dbReference type="SAM" id="MobiDB-lite"/>
    </source>
</evidence>
<accession>A7IB67</accession>
<dbReference type="EMBL" id="CP000781">
    <property type="protein sequence ID" value="ABS65260.1"/>
    <property type="molecule type" value="Genomic_DNA"/>
</dbReference>
<dbReference type="SMR" id="A7IB67"/>
<dbReference type="STRING" id="78245.Xaut_0001"/>
<dbReference type="KEGG" id="xau:Xaut_0001"/>
<dbReference type="eggNOG" id="COG0593">
    <property type="taxonomic scope" value="Bacteria"/>
</dbReference>
<dbReference type="HOGENOM" id="CLU_026910_3_0_5"/>
<dbReference type="OrthoDB" id="9807019at2"/>
<dbReference type="PhylomeDB" id="A7IB67"/>
<dbReference type="Proteomes" id="UP000002417">
    <property type="component" value="Chromosome"/>
</dbReference>
<dbReference type="GO" id="GO:0005737">
    <property type="term" value="C:cytoplasm"/>
    <property type="evidence" value="ECO:0007669"/>
    <property type="project" value="UniProtKB-SubCell"/>
</dbReference>
<dbReference type="GO" id="GO:0005886">
    <property type="term" value="C:plasma membrane"/>
    <property type="evidence" value="ECO:0007669"/>
    <property type="project" value="TreeGrafter"/>
</dbReference>
<dbReference type="GO" id="GO:0005524">
    <property type="term" value="F:ATP binding"/>
    <property type="evidence" value="ECO:0007669"/>
    <property type="project" value="UniProtKB-UniRule"/>
</dbReference>
<dbReference type="GO" id="GO:0003688">
    <property type="term" value="F:DNA replication origin binding"/>
    <property type="evidence" value="ECO:0007669"/>
    <property type="project" value="UniProtKB-UniRule"/>
</dbReference>
<dbReference type="GO" id="GO:0008289">
    <property type="term" value="F:lipid binding"/>
    <property type="evidence" value="ECO:0007669"/>
    <property type="project" value="UniProtKB-KW"/>
</dbReference>
<dbReference type="GO" id="GO:0006270">
    <property type="term" value="P:DNA replication initiation"/>
    <property type="evidence" value="ECO:0007669"/>
    <property type="project" value="UniProtKB-UniRule"/>
</dbReference>
<dbReference type="GO" id="GO:0006275">
    <property type="term" value="P:regulation of DNA replication"/>
    <property type="evidence" value="ECO:0007669"/>
    <property type="project" value="UniProtKB-UniRule"/>
</dbReference>
<dbReference type="CDD" id="cd00009">
    <property type="entry name" value="AAA"/>
    <property type="match status" value="1"/>
</dbReference>
<dbReference type="CDD" id="cd06571">
    <property type="entry name" value="Bac_DnaA_C"/>
    <property type="match status" value="1"/>
</dbReference>
<dbReference type="Gene3D" id="1.10.1750.10">
    <property type="match status" value="1"/>
</dbReference>
<dbReference type="Gene3D" id="1.10.8.60">
    <property type="match status" value="1"/>
</dbReference>
<dbReference type="Gene3D" id="3.30.300.180">
    <property type="match status" value="1"/>
</dbReference>
<dbReference type="Gene3D" id="3.40.50.300">
    <property type="entry name" value="P-loop containing nucleotide triphosphate hydrolases"/>
    <property type="match status" value="1"/>
</dbReference>
<dbReference type="HAMAP" id="MF_00377">
    <property type="entry name" value="DnaA_bact"/>
    <property type="match status" value="1"/>
</dbReference>
<dbReference type="InterPro" id="IPR001957">
    <property type="entry name" value="Chromosome_initiator_DnaA"/>
</dbReference>
<dbReference type="InterPro" id="IPR020591">
    <property type="entry name" value="Chromosome_initiator_DnaA-like"/>
</dbReference>
<dbReference type="InterPro" id="IPR018312">
    <property type="entry name" value="Chromosome_initiator_DnaA_CS"/>
</dbReference>
<dbReference type="InterPro" id="IPR013159">
    <property type="entry name" value="DnaA_C"/>
</dbReference>
<dbReference type="InterPro" id="IPR013317">
    <property type="entry name" value="DnaA_dom"/>
</dbReference>
<dbReference type="InterPro" id="IPR024633">
    <property type="entry name" value="DnaA_N_dom"/>
</dbReference>
<dbReference type="InterPro" id="IPR038454">
    <property type="entry name" value="DnaA_N_sf"/>
</dbReference>
<dbReference type="InterPro" id="IPR027417">
    <property type="entry name" value="P-loop_NTPase"/>
</dbReference>
<dbReference type="InterPro" id="IPR010921">
    <property type="entry name" value="Trp_repressor/repl_initiator"/>
</dbReference>
<dbReference type="NCBIfam" id="TIGR00362">
    <property type="entry name" value="DnaA"/>
    <property type="match status" value="1"/>
</dbReference>
<dbReference type="PANTHER" id="PTHR30050">
    <property type="entry name" value="CHROMOSOMAL REPLICATION INITIATOR PROTEIN DNAA"/>
    <property type="match status" value="1"/>
</dbReference>
<dbReference type="PANTHER" id="PTHR30050:SF2">
    <property type="entry name" value="CHROMOSOMAL REPLICATION INITIATOR PROTEIN DNAA"/>
    <property type="match status" value="1"/>
</dbReference>
<dbReference type="Pfam" id="PF00308">
    <property type="entry name" value="Bac_DnaA"/>
    <property type="match status" value="1"/>
</dbReference>
<dbReference type="Pfam" id="PF08299">
    <property type="entry name" value="Bac_DnaA_C"/>
    <property type="match status" value="1"/>
</dbReference>
<dbReference type="Pfam" id="PF11638">
    <property type="entry name" value="DnaA_N"/>
    <property type="match status" value="1"/>
</dbReference>
<dbReference type="PRINTS" id="PR00051">
    <property type="entry name" value="DNAA"/>
</dbReference>
<dbReference type="SMART" id="SM00760">
    <property type="entry name" value="Bac_DnaA_C"/>
    <property type="match status" value="1"/>
</dbReference>
<dbReference type="SUPFAM" id="SSF52540">
    <property type="entry name" value="P-loop containing nucleoside triphosphate hydrolases"/>
    <property type="match status" value="1"/>
</dbReference>
<dbReference type="SUPFAM" id="SSF48295">
    <property type="entry name" value="TrpR-like"/>
    <property type="match status" value="1"/>
</dbReference>
<dbReference type="PROSITE" id="PS01008">
    <property type="entry name" value="DNAA"/>
    <property type="match status" value="1"/>
</dbReference>
<gene>
    <name evidence="1" type="primary">dnaA</name>
    <name type="ordered locus">Xaut_0001</name>
</gene>
<name>DNAA_XANP2</name>
<proteinExistence type="inferred from homology"/>
<protein>
    <recommendedName>
        <fullName evidence="1">Chromosomal replication initiator protein DnaA</fullName>
    </recommendedName>
</protein>
<comment type="function">
    <text evidence="1">Plays an essential role in the initiation and regulation of chromosomal replication. ATP-DnaA binds to the origin of replication (oriC) to initiate formation of the DNA replication initiation complex once per cell cycle. Binds the DnaA box (a 9 base pair repeat at the origin) and separates the double-stranded (ds)DNA. Forms a right-handed helical filament on oriC DNA; dsDNA binds to the exterior of the filament while single-stranded (ss)DNA is stabiized in the filament's interior. The ATP-DnaA-oriC complex binds and stabilizes one strand of the AT-rich DNA unwinding element (DUE), permitting loading of DNA polymerase. After initiation quickly degrades to an ADP-DnaA complex that is not apt for DNA replication. Binds acidic phospholipids.</text>
</comment>
<comment type="subunit">
    <text evidence="1">Oligomerizes as a right-handed, spiral filament on DNA at oriC.</text>
</comment>
<comment type="subcellular location">
    <subcellularLocation>
        <location evidence="1">Cytoplasm</location>
    </subcellularLocation>
</comment>
<comment type="domain">
    <text evidence="1">Domain I is involved in oligomerization and binding regulators, domain II is flexibile and of varying length in different bacteria, domain III forms the AAA+ region, while domain IV binds dsDNA.</text>
</comment>
<comment type="similarity">
    <text evidence="1">Belongs to the DnaA family.</text>
</comment>
<organism>
    <name type="scientific">Xanthobacter autotrophicus (strain ATCC BAA-1158 / Py2)</name>
    <dbReference type="NCBI Taxonomy" id="78245"/>
    <lineage>
        <taxon>Bacteria</taxon>
        <taxon>Pseudomonadati</taxon>
        <taxon>Pseudomonadota</taxon>
        <taxon>Alphaproteobacteria</taxon>
        <taxon>Hyphomicrobiales</taxon>
        <taxon>Xanthobacteraceae</taxon>
        <taxon>Xanthobacter</taxon>
    </lineage>
</organism>
<reference key="1">
    <citation type="submission" date="2007-07" db="EMBL/GenBank/DDBJ databases">
        <title>Complete sequence of chromosome of Xanthobacter autotrophicus Py2.</title>
        <authorList>
            <consortium name="US DOE Joint Genome Institute"/>
            <person name="Copeland A."/>
            <person name="Lucas S."/>
            <person name="Lapidus A."/>
            <person name="Barry K."/>
            <person name="Glavina del Rio T."/>
            <person name="Hammon N."/>
            <person name="Israni S."/>
            <person name="Dalin E."/>
            <person name="Tice H."/>
            <person name="Pitluck S."/>
            <person name="Sims D."/>
            <person name="Brettin T."/>
            <person name="Bruce D."/>
            <person name="Detter J.C."/>
            <person name="Han C."/>
            <person name="Tapia R."/>
            <person name="Brainard J."/>
            <person name="Schmutz J."/>
            <person name="Larimer F."/>
            <person name="Land M."/>
            <person name="Hauser L."/>
            <person name="Kyrpides N."/>
            <person name="Kim E."/>
            <person name="Ensigns S.A."/>
            <person name="Richardson P."/>
        </authorList>
    </citation>
    <scope>NUCLEOTIDE SEQUENCE [LARGE SCALE GENOMIC DNA]</scope>
    <source>
        <strain>ATCC BAA-1158 / Py2</strain>
    </source>
</reference>
<keyword id="KW-0067">ATP-binding</keyword>
<keyword id="KW-0963">Cytoplasm</keyword>
<keyword id="KW-0235">DNA replication</keyword>
<keyword id="KW-0238">DNA-binding</keyword>
<keyword id="KW-0446">Lipid-binding</keyword>
<keyword id="KW-0547">Nucleotide-binding</keyword>
<keyword id="KW-1185">Reference proteome</keyword>